<accession>A4IWW5</accession>
<feature type="chain" id="PRO_0000305452" description="Pantothenate synthetase">
    <location>
        <begin position="1"/>
        <end position="261"/>
    </location>
</feature>
<feature type="active site" description="Proton donor" evidence="1">
    <location>
        <position position="36"/>
    </location>
</feature>
<feature type="binding site" evidence="1">
    <location>
        <begin position="29"/>
        <end position="36"/>
    </location>
    <ligand>
        <name>ATP</name>
        <dbReference type="ChEBI" id="CHEBI:30616"/>
    </ligand>
</feature>
<feature type="binding site" evidence="1">
    <location>
        <position position="60"/>
    </location>
    <ligand>
        <name>(R)-pantoate</name>
        <dbReference type="ChEBI" id="CHEBI:15980"/>
    </ligand>
</feature>
<feature type="binding site" evidence="1">
    <location>
        <position position="60"/>
    </location>
    <ligand>
        <name>beta-alanine</name>
        <dbReference type="ChEBI" id="CHEBI:57966"/>
    </ligand>
</feature>
<feature type="binding site" evidence="1">
    <location>
        <begin position="147"/>
        <end position="150"/>
    </location>
    <ligand>
        <name>ATP</name>
        <dbReference type="ChEBI" id="CHEBI:30616"/>
    </ligand>
</feature>
<feature type="binding site" evidence="1">
    <location>
        <position position="153"/>
    </location>
    <ligand>
        <name>(R)-pantoate</name>
        <dbReference type="ChEBI" id="CHEBI:15980"/>
    </ligand>
</feature>
<feature type="binding site" evidence="1">
    <location>
        <begin position="184"/>
        <end position="187"/>
    </location>
    <ligand>
        <name>ATP</name>
        <dbReference type="ChEBI" id="CHEBI:30616"/>
    </ligand>
</feature>
<protein>
    <recommendedName>
        <fullName evidence="1">Pantothenate synthetase</fullName>
        <shortName evidence="1">PS</shortName>
        <ecNumber evidence="1">6.3.2.1</ecNumber>
    </recommendedName>
    <alternativeName>
        <fullName evidence="1">Pantoate--beta-alanine ligase</fullName>
    </alternativeName>
    <alternativeName>
        <fullName evidence="1">Pantoate-activating enzyme</fullName>
    </alternativeName>
</protein>
<reference key="1">
    <citation type="journal article" date="2007" name="PLoS ONE">
        <title>Complete genomic characterization of a pathogenic A.II strain of Francisella tularensis subspecies tularensis.</title>
        <authorList>
            <person name="Beckstrom-Sternberg S.M."/>
            <person name="Auerbach R.K."/>
            <person name="Godbole S."/>
            <person name="Pearson J.V."/>
            <person name="Beckstrom-Sternberg J.S."/>
            <person name="Deng Z."/>
            <person name="Munk C."/>
            <person name="Kubota K."/>
            <person name="Zhou Y."/>
            <person name="Bruce D."/>
            <person name="Noronha J."/>
            <person name="Scheuermann R.H."/>
            <person name="Wang A."/>
            <person name="Wei X."/>
            <person name="Wang J."/>
            <person name="Hao J."/>
            <person name="Wagner D.M."/>
            <person name="Brettin T.S."/>
            <person name="Brown N."/>
            <person name="Gilna P."/>
            <person name="Keim P.S."/>
        </authorList>
    </citation>
    <scope>NUCLEOTIDE SEQUENCE [LARGE SCALE GENOMIC DNA]</scope>
    <source>
        <strain>WY96-3418</strain>
    </source>
</reference>
<proteinExistence type="inferred from homology"/>
<evidence type="ECO:0000255" key="1">
    <source>
        <dbReference type="HAMAP-Rule" id="MF_00158"/>
    </source>
</evidence>
<name>PANC_FRATW</name>
<sequence length="261" mass="29715">MIIADNIKQFHSIRNSLIKQQKIGFVPTMGALHNGHISLIKKAKSENDVVIVSIFVNPTQFNNPNDYQTYPNQLQQDIQILASLDVDVLFNPSEKDIYPDGNLLRIEPKLEIANILEGKSRPGHFSGMLTVVLKLLQITKPNNLYLGEKDYQQVMLIKQLVKDFFINTKIIVCPTQRQPSGLPLSSRNKNLTSTDIEIANKIYEILRQDDFSNLEELTNKINSTGAKLQYIQKLNNRIFLAFYIGKVRLIDNFLKETGPSC</sequence>
<organism>
    <name type="scientific">Francisella tularensis subsp. tularensis (strain WY96-3418)</name>
    <dbReference type="NCBI Taxonomy" id="418136"/>
    <lineage>
        <taxon>Bacteria</taxon>
        <taxon>Pseudomonadati</taxon>
        <taxon>Pseudomonadota</taxon>
        <taxon>Gammaproteobacteria</taxon>
        <taxon>Thiotrichales</taxon>
        <taxon>Francisellaceae</taxon>
        <taxon>Francisella</taxon>
    </lineage>
</organism>
<gene>
    <name evidence="1" type="primary">panC</name>
    <name type="ordered locus">FTW_0498</name>
</gene>
<comment type="function">
    <text evidence="1">Catalyzes the condensation of pantoate with beta-alanine in an ATP-dependent reaction via a pantoyl-adenylate intermediate.</text>
</comment>
<comment type="catalytic activity">
    <reaction evidence="1">
        <text>(R)-pantoate + beta-alanine + ATP = (R)-pantothenate + AMP + diphosphate + H(+)</text>
        <dbReference type="Rhea" id="RHEA:10912"/>
        <dbReference type="ChEBI" id="CHEBI:15378"/>
        <dbReference type="ChEBI" id="CHEBI:15980"/>
        <dbReference type="ChEBI" id="CHEBI:29032"/>
        <dbReference type="ChEBI" id="CHEBI:30616"/>
        <dbReference type="ChEBI" id="CHEBI:33019"/>
        <dbReference type="ChEBI" id="CHEBI:57966"/>
        <dbReference type="ChEBI" id="CHEBI:456215"/>
        <dbReference type="EC" id="6.3.2.1"/>
    </reaction>
</comment>
<comment type="pathway">
    <text evidence="1">Cofactor biosynthesis; (R)-pantothenate biosynthesis; (R)-pantothenate from (R)-pantoate and beta-alanine: step 1/1.</text>
</comment>
<comment type="subunit">
    <text evidence="1">Homodimer.</text>
</comment>
<comment type="subcellular location">
    <subcellularLocation>
        <location evidence="1">Cytoplasm</location>
    </subcellularLocation>
</comment>
<comment type="miscellaneous">
    <text evidence="1">The reaction proceeds by a bi uni uni bi ping pong mechanism.</text>
</comment>
<comment type="similarity">
    <text evidence="1">Belongs to the pantothenate synthetase family.</text>
</comment>
<keyword id="KW-0067">ATP-binding</keyword>
<keyword id="KW-0963">Cytoplasm</keyword>
<keyword id="KW-0436">Ligase</keyword>
<keyword id="KW-0547">Nucleotide-binding</keyword>
<keyword id="KW-0566">Pantothenate biosynthesis</keyword>
<dbReference type="EC" id="6.3.2.1" evidence="1"/>
<dbReference type="EMBL" id="CP000608">
    <property type="protein sequence ID" value="ABO46417.1"/>
    <property type="molecule type" value="Genomic_DNA"/>
</dbReference>
<dbReference type="RefSeq" id="WP_003022190.1">
    <property type="nucleotide sequence ID" value="NC_009257.1"/>
</dbReference>
<dbReference type="SMR" id="A4IWW5"/>
<dbReference type="KEGG" id="ftw:FTW_0498"/>
<dbReference type="HOGENOM" id="CLU_047148_0_2_6"/>
<dbReference type="UniPathway" id="UPA00028">
    <property type="reaction ID" value="UER00005"/>
</dbReference>
<dbReference type="GO" id="GO:0005829">
    <property type="term" value="C:cytosol"/>
    <property type="evidence" value="ECO:0007669"/>
    <property type="project" value="TreeGrafter"/>
</dbReference>
<dbReference type="GO" id="GO:0005524">
    <property type="term" value="F:ATP binding"/>
    <property type="evidence" value="ECO:0007669"/>
    <property type="project" value="UniProtKB-KW"/>
</dbReference>
<dbReference type="GO" id="GO:0004592">
    <property type="term" value="F:pantoate-beta-alanine ligase activity"/>
    <property type="evidence" value="ECO:0007669"/>
    <property type="project" value="UniProtKB-UniRule"/>
</dbReference>
<dbReference type="GO" id="GO:0015940">
    <property type="term" value="P:pantothenate biosynthetic process"/>
    <property type="evidence" value="ECO:0007669"/>
    <property type="project" value="UniProtKB-UniRule"/>
</dbReference>
<dbReference type="Gene3D" id="3.40.50.620">
    <property type="entry name" value="HUPs"/>
    <property type="match status" value="1"/>
</dbReference>
<dbReference type="Gene3D" id="3.30.1300.10">
    <property type="entry name" value="Pantoate-beta-alanine ligase, C-terminal domain"/>
    <property type="match status" value="1"/>
</dbReference>
<dbReference type="HAMAP" id="MF_00158">
    <property type="entry name" value="PanC"/>
    <property type="match status" value="1"/>
</dbReference>
<dbReference type="InterPro" id="IPR004821">
    <property type="entry name" value="Cyt_trans-like"/>
</dbReference>
<dbReference type="InterPro" id="IPR003721">
    <property type="entry name" value="Pantoate_ligase"/>
</dbReference>
<dbReference type="InterPro" id="IPR042176">
    <property type="entry name" value="Pantoate_ligase_C"/>
</dbReference>
<dbReference type="InterPro" id="IPR014729">
    <property type="entry name" value="Rossmann-like_a/b/a_fold"/>
</dbReference>
<dbReference type="NCBIfam" id="TIGR00125">
    <property type="entry name" value="cyt_tran_rel"/>
    <property type="match status" value="1"/>
</dbReference>
<dbReference type="NCBIfam" id="TIGR00018">
    <property type="entry name" value="panC"/>
    <property type="match status" value="1"/>
</dbReference>
<dbReference type="PANTHER" id="PTHR21299">
    <property type="entry name" value="CYTIDYLATE KINASE/PANTOATE-BETA-ALANINE LIGASE"/>
    <property type="match status" value="1"/>
</dbReference>
<dbReference type="PANTHER" id="PTHR21299:SF1">
    <property type="entry name" value="PANTOATE--BETA-ALANINE LIGASE"/>
    <property type="match status" value="1"/>
</dbReference>
<dbReference type="Pfam" id="PF02569">
    <property type="entry name" value="Pantoate_ligase"/>
    <property type="match status" value="1"/>
</dbReference>
<dbReference type="SUPFAM" id="SSF52374">
    <property type="entry name" value="Nucleotidylyl transferase"/>
    <property type="match status" value="1"/>
</dbReference>